<protein>
    <recommendedName>
        <fullName evidence="1">Small ribosomal subunit protein uS14</fullName>
    </recommendedName>
    <alternativeName>
        <fullName evidence="2">30S ribosomal protein S14 type Z</fullName>
    </alternativeName>
</protein>
<evidence type="ECO:0000255" key="1">
    <source>
        <dbReference type="HAMAP-Rule" id="MF_01364"/>
    </source>
</evidence>
<evidence type="ECO:0000305" key="2"/>
<dbReference type="EMBL" id="CP000923">
    <property type="protein sequence ID" value="ABY92182.1"/>
    <property type="molecule type" value="Genomic_DNA"/>
</dbReference>
<dbReference type="RefSeq" id="WP_003868573.1">
    <property type="nucleotide sequence ID" value="NC_010320.1"/>
</dbReference>
<dbReference type="SMR" id="B0K5Q6"/>
<dbReference type="KEGG" id="tex:Teth514_0880"/>
<dbReference type="HOGENOM" id="CLU_139869_3_0_9"/>
<dbReference type="Proteomes" id="UP000002155">
    <property type="component" value="Chromosome"/>
</dbReference>
<dbReference type="GO" id="GO:0005737">
    <property type="term" value="C:cytoplasm"/>
    <property type="evidence" value="ECO:0007669"/>
    <property type="project" value="UniProtKB-ARBA"/>
</dbReference>
<dbReference type="GO" id="GO:0015935">
    <property type="term" value="C:small ribosomal subunit"/>
    <property type="evidence" value="ECO:0007669"/>
    <property type="project" value="TreeGrafter"/>
</dbReference>
<dbReference type="GO" id="GO:0019843">
    <property type="term" value="F:rRNA binding"/>
    <property type="evidence" value="ECO:0007669"/>
    <property type="project" value="UniProtKB-UniRule"/>
</dbReference>
<dbReference type="GO" id="GO:0003735">
    <property type="term" value="F:structural constituent of ribosome"/>
    <property type="evidence" value="ECO:0007669"/>
    <property type="project" value="InterPro"/>
</dbReference>
<dbReference type="GO" id="GO:0008270">
    <property type="term" value="F:zinc ion binding"/>
    <property type="evidence" value="ECO:0007669"/>
    <property type="project" value="UniProtKB-UniRule"/>
</dbReference>
<dbReference type="GO" id="GO:0006412">
    <property type="term" value="P:translation"/>
    <property type="evidence" value="ECO:0007669"/>
    <property type="project" value="UniProtKB-UniRule"/>
</dbReference>
<dbReference type="FunFam" id="4.10.830.10:FF:000001">
    <property type="entry name" value="30S ribosomal protein S14 type Z"/>
    <property type="match status" value="1"/>
</dbReference>
<dbReference type="Gene3D" id="4.10.830.10">
    <property type="entry name" value="30s Ribosomal Protein S14, Chain N"/>
    <property type="match status" value="1"/>
</dbReference>
<dbReference type="HAMAP" id="MF_01364_B">
    <property type="entry name" value="Ribosomal_uS14_2_B"/>
    <property type="match status" value="1"/>
</dbReference>
<dbReference type="InterPro" id="IPR001209">
    <property type="entry name" value="Ribosomal_uS14"/>
</dbReference>
<dbReference type="InterPro" id="IPR023053">
    <property type="entry name" value="Ribosomal_uS14_bact"/>
</dbReference>
<dbReference type="InterPro" id="IPR018271">
    <property type="entry name" value="Ribosomal_uS14_CS"/>
</dbReference>
<dbReference type="InterPro" id="IPR043140">
    <property type="entry name" value="Ribosomal_uS14_sf"/>
</dbReference>
<dbReference type="NCBIfam" id="NF005974">
    <property type="entry name" value="PRK08061.1"/>
    <property type="match status" value="1"/>
</dbReference>
<dbReference type="PANTHER" id="PTHR19836">
    <property type="entry name" value="30S RIBOSOMAL PROTEIN S14"/>
    <property type="match status" value="1"/>
</dbReference>
<dbReference type="PANTHER" id="PTHR19836:SF19">
    <property type="entry name" value="SMALL RIBOSOMAL SUBUNIT PROTEIN US14M"/>
    <property type="match status" value="1"/>
</dbReference>
<dbReference type="Pfam" id="PF00253">
    <property type="entry name" value="Ribosomal_S14"/>
    <property type="match status" value="1"/>
</dbReference>
<dbReference type="SUPFAM" id="SSF57716">
    <property type="entry name" value="Glucocorticoid receptor-like (DNA-binding domain)"/>
    <property type="match status" value="1"/>
</dbReference>
<dbReference type="PROSITE" id="PS00527">
    <property type="entry name" value="RIBOSOMAL_S14"/>
    <property type="match status" value="1"/>
</dbReference>
<feature type="chain" id="PRO_1000143924" description="Small ribosomal subunit protein uS14">
    <location>
        <begin position="1"/>
        <end position="61"/>
    </location>
</feature>
<feature type="binding site" evidence="1">
    <location>
        <position position="24"/>
    </location>
    <ligand>
        <name>Zn(2+)</name>
        <dbReference type="ChEBI" id="CHEBI:29105"/>
    </ligand>
</feature>
<feature type="binding site" evidence="1">
    <location>
        <position position="27"/>
    </location>
    <ligand>
        <name>Zn(2+)</name>
        <dbReference type="ChEBI" id="CHEBI:29105"/>
    </ligand>
</feature>
<feature type="binding site" evidence="1">
    <location>
        <position position="40"/>
    </location>
    <ligand>
        <name>Zn(2+)</name>
        <dbReference type="ChEBI" id="CHEBI:29105"/>
    </ligand>
</feature>
<feature type="binding site" evidence="1">
    <location>
        <position position="43"/>
    </location>
    <ligand>
        <name>Zn(2+)</name>
        <dbReference type="ChEBI" id="CHEBI:29105"/>
    </ligand>
</feature>
<reference key="1">
    <citation type="submission" date="2008-01" db="EMBL/GenBank/DDBJ databases">
        <title>Complete sequence of Thermoanaerobacter sp. X514.</title>
        <authorList>
            <consortium name="US DOE Joint Genome Institute"/>
            <person name="Copeland A."/>
            <person name="Lucas S."/>
            <person name="Lapidus A."/>
            <person name="Barry K."/>
            <person name="Glavina del Rio T."/>
            <person name="Dalin E."/>
            <person name="Tice H."/>
            <person name="Pitluck S."/>
            <person name="Bruce D."/>
            <person name="Goodwin L."/>
            <person name="Saunders E."/>
            <person name="Brettin T."/>
            <person name="Detter J.C."/>
            <person name="Han C."/>
            <person name="Schmutz J."/>
            <person name="Larimer F."/>
            <person name="Land M."/>
            <person name="Hauser L."/>
            <person name="Kyrpides N."/>
            <person name="Kim E."/>
            <person name="Hemme C."/>
            <person name="Fields M.W."/>
            <person name="He Z."/>
            <person name="Zhou J."/>
            <person name="Richardson P."/>
        </authorList>
    </citation>
    <scope>NUCLEOTIDE SEQUENCE [LARGE SCALE GENOMIC DNA]</scope>
    <source>
        <strain>X514</strain>
    </source>
</reference>
<gene>
    <name evidence="1" type="primary">rpsZ</name>
    <name evidence="1" type="synonym">rpsN</name>
    <name type="ordered locus">Teth514_0880</name>
</gene>
<name>RS14Z_THEPX</name>
<organism>
    <name type="scientific">Thermoanaerobacter sp. (strain X514)</name>
    <dbReference type="NCBI Taxonomy" id="399726"/>
    <lineage>
        <taxon>Bacteria</taxon>
        <taxon>Bacillati</taxon>
        <taxon>Bacillota</taxon>
        <taxon>Clostridia</taxon>
        <taxon>Thermoanaerobacterales</taxon>
        <taxon>Thermoanaerobacteraceae</taxon>
        <taxon>Thermoanaerobacter</taxon>
    </lineage>
</organism>
<keyword id="KW-0479">Metal-binding</keyword>
<keyword id="KW-0687">Ribonucleoprotein</keyword>
<keyword id="KW-0689">Ribosomal protein</keyword>
<keyword id="KW-0694">RNA-binding</keyword>
<keyword id="KW-0699">rRNA-binding</keyword>
<keyword id="KW-0862">Zinc</keyword>
<sequence length="61" mass="7303">MARKALIVKQQKPQKYKTREYNRCKICGRPHAYLRKFGMCRICFRKYAHQGMIPGVKKASW</sequence>
<proteinExistence type="inferred from homology"/>
<comment type="function">
    <text evidence="1">Binds 16S rRNA, required for the assembly of 30S particles and may also be responsible for determining the conformation of the 16S rRNA at the A site.</text>
</comment>
<comment type="cofactor">
    <cofactor evidence="1">
        <name>Zn(2+)</name>
        <dbReference type="ChEBI" id="CHEBI:29105"/>
    </cofactor>
    <text evidence="1">Binds 1 zinc ion per subunit.</text>
</comment>
<comment type="subunit">
    <text evidence="1">Part of the 30S ribosomal subunit. Contacts proteins S3 and S10.</text>
</comment>
<comment type="similarity">
    <text evidence="1">Belongs to the universal ribosomal protein uS14 family. Zinc-binding uS14 subfamily.</text>
</comment>
<accession>B0K5Q6</accession>